<reference key="1">
    <citation type="journal article" date="2010" name="J. Bacteriol.">
        <title>The genetic basis of laboratory adaptation in Caulobacter crescentus.</title>
        <authorList>
            <person name="Marks M.E."/>
            <person name="Castro-Rojas C.M."/>
            <person name="Teiling C."/>
            <person name="Du L."/>
            <person name="Kapatral V."/>
            <person name="Walunas T.L."/>
            <person name="Crosson S."/>
        </authorList>
    </citation>
    <scope>NUCLEOTIDE SEQUENCE [LARGE SCALE GENOMIC DNA]</scope>
    <source>
        <strain>NA1000 / CB15N</strain>
    </source>
</reference>
<name>GLSA_CAUVN</name>
<feature type="chain" id="PRO_1000132903" description="Glutaminase">
    <location>
        <begin position="1"/>
        <end position="306"/>
    </location>
</feature>
<feature type="binding site" evidence="1">
    <location>
        <position position="66"/>
    </location>
    <ligand>
        <name>substrate</name>
    </ligand>
</feature>
<feature type="binding site" evidence="1">
    <location>
        <position position="116"/>
    </location>
    <ligand>
        <name>substrate</name>
    </ligand>
</feature>
<feature type="binding site" evidence="1">
    <location>
        <position position="159"/>
    </location>
    <ligand>
        <name>substrate</name>
    </ligand>
</feature>
<feature type="binding site" evidence="1">
    <location>
        <position position="166"/>
    </location>
    <ligand>
        <name>substrate</name>
    </ligand>
</feature>
<feature type="binding site" evidence="1">
    <location>
        <position position="190"/>
    </location>
    <ligand>
        <name>substrate</name>
    </ligand>
</feature>
<feature type="binding site" evidence="1">
    <location>
        <position position="242"/>
    </location>
    <ligand>
        <name>substrate</name>
    </ligand>
</feature>
<feature type="binding site" evidence="1">
    <location>
        <position position="260"/>
    </location>
    <ligand>
        <name>substrate</name>
    </ligand>
</feature>
<dbReference type="EC" id="3.5.1.2" evidence="1"/>
<dbReference type="EMBL" id="CP001340">
    <property type="protein sequence ID" value="ACL93745.1"/>
    <property type="molecule type" value="Genomic_DNA"/>
</dbReference>
<dbReference type="RefSeq" id="WP_010918165.1">
    <property type="nucleotide sequence ID" value="NC_011916.1"/>
</dbReference>
<dbReference type="RefSeq" id="YP_002515653.1">
    <property type="nucleotide sequence ID" value="NC_011916.1"/>
</dbReference>
<dbReference type="SMR" id="B8GYE8"/>
<dbReference type="GeneID" id="7330731"/>
<dbReference type="KEGG" id="ccs:CCNA_00278"/>
<dbReference type="PATRIC" id="fig|565050.3.peg.275"/>
<dbReference type="HOGENOM" id="CLU_027932_1_1_5"/>
<dbReference type="OrthoDB" id="9788822at2"/>
<dbReference type="PhylomeDB" id="B8GYE8"/>
<dbReference type="Proteomes" id="UP000001364">
    <property type="component" value="Chromosome"/>
</dbReference>
<dbReference type="GO" id="GO:0004359">
    <property type="term" value="F:glutaminase activity"/>
    <property type="evidence" value="ECO:0007669"/>
    <property type="project" value="UniProtKB-UniRule"/>
</dbReference>
<dbReference type="GO" id="GO:0006537">
    <property type="term" value="P:glutamate biosynthetic process"/>
    <property type="evidence" value="ECO:0007669"/>
    <property type="project" value="TreeGrafter"/>
</dbReference>
<dbReference type="GO" id="GO:0006543">
    <property type="term" value="P:glutamine catabolic process"/>
    <property type="evidence" value="ECO:0007669"/>
    <property type="project" value="TreeGrafter"/>
</dbReference>
<dbReference type="FunFam" id="3.40.710.10:FF:000005">
    <property type="entry name" value="Glutaminase"/>
    <property type="match status" value="1"/>
</dbReference>
<dbReference type="Gene3D" id="3.40.710.10">
    <property type="entry name" value="DD-peptidase/beta-lactamase superfamily"/>
    <property type="match status" value="1"/>
</dbReference>
<dbReference type="HAMAP" id="MF_00313">
    <property type="entry name" value="Glutaminase"/>
    <property type="match status" value="1"/>
</dbReference>
<dbReference type="InterPro" id="IPR012338">
    <property type="entry name" value="Beta-lactam/transpept-like"/>
</dbReference>
<dbReference type="InterPro" id="IPR015868">
    <property type="entry name" value="Glutaminase"/>
</dbReference>
<dbReference type="NCBIfam" id="TIGR03814">
    <property type="entry name" value="Gln_ase"/>
    <property type="match status" value="1"/>
</dbReference>
<dbReference type="NCBIfam" id="NF002133">
    <property type="entry name" value="PRK00971.1-2"/>
    <property type="match status" value="1"/>
</dbReference>
<dbReference type="PANTHER" id="PTHR12544">
    <property type="entry name" value="GLUTAMINASE"/>
    <property type="match status" value="1"/>
</dbReference>
<dbReference type="PANTHER" id="PTHR12544:SF29">
    <property type="entry name" value="GLUTAMINASE"/>
    <property type="match status" value="1"/>
</dbReference>
<dbReference type="Pfam" id="PF04960">
    <property type="entry name" value="Glutaminase"/>
    <property type="match status" value="1"/>
</dbReference>
<dbReference type="SUPFAM" id="SSF56601">
    <property type="entry name" value="beta-lactamase/transpeptidase-like"/>
    <property type="match status" value="1"/>
</dbReference>
<accession>B8GYE8</accession>
<evidence type="ECO:0000255" key="1">
    <source>
        <dbReference type="HAMAP-Rule" id="MF_00313"/>
    </source>
</evidence>
<sequence>MKALSIPDVLAEVAVLVRPHFGKGKPADYIPQLATVPGGKFGMAVRMVDGDEHVIGDADEGFSVQSITKVFALGLALNRLGDEIWTRVGKEPSGTPFNHLSLLEAEQGVPRNPFINAGALAVTDVLMDVTRDPAALVRDFGGFLCGERLEIDPAVATSELAHAWQNRAIASLMRAKGTITHDPEAVVAAYCRQCALSMSCRQLARAFLPLAAGGFSPIAQETVFPERLTRRLNALLLTCGIYDSVGSFAYRVGLPAKSGVGGGIVAVVPGKATVAVWSPELDRFGTSVVGTAALEAFSQITNCSVL</sequence>
<comment type="catalytic activity">
    <reaction evidence="1">
        <text>L-glutamine + H2O = L-glutamate + NH4(+)</text>
        <dbReference type="Rhea" id="RHEA:15889"/>
        <dbReference type="ChEBI" id="CHEBI:15377"/>
        <dbReference type="ChEBI" id="CHEBI:28938"/>
        <dbReference type="ChEBI" id="CHEBI:29985"/>
        <dbReference type="ChEBI" id="CHEBI:58359"/>
        <dbReference type="EC" id="3.5.1.2"/>
    </reaction>
</comment>
<comment type="subunit">
    <text evidence="1">Homotetramer.</text>
</comment>
<comment type="similarity">
    <text evidence="1">Belongs to the glutaminase family.</text>
</comment>
<protein>
    <recommendedName>
        <fullName evidence="1">Glutaminase</fullName>
        <ecNumber evidence="1">3.5.1.2</ecNumber>
    </recommendedName>
</protein>
<gene>
    <name evidence="1" type="primary">glsA</name>
    <name type="ordered locus">CCNA_00278</name>
</gene>
<proteinExistence type="inferred from homology"/>
<organism>
    <name type="scientific">Caulobacter vibrioides (strain NA1000 / CB15N)</name>
    <name type="common">Caulobacter crescentus</name>
    <dbReference type="NCBI Taxonomy" id="565050"/>
    <lineage>
        <taxon>Bacteria</taxon>
        <taxon>Pseudomonadati</taxon>
        <taxon>Pseudomonadota</taxon>
        <taxon>Alphaproteobacteria</taxon>
        <taxon>Caulobacterales</taxon>
        <taxon>Caulobacteraceae</taxon>
        <taxon>Caulobacter</taxon>
    </lineage>
</organism>
<keyword id="KW-0378">Hydrolase</keyword>
<keyword id="KW-1185">Reference proteome</keyword>